<evidence type="ECO:0000255" key="1">
    <source>
        <dbReference type="HAMAP-Rule" id="MF_01232"/>
    </source>
</evidence>
<evidence type="ECO:0000256" key="2">
    <source>
        <dbReference type="SAM" id="MobiDB-lite"/>
    </source>
</evidence>
<gene>
    <name type="ordered locus">Meso_0256</name>
</gene>
<name>Y256_CHESB</name>
<proteinExistence type="inferred from homology"/>
<protein>
    <recommendedName>
        <fullName evidence="1">UPF0229 protein Meso_0256</fullName>
    </recommendedName>
</protein>
<reference key="1">
    <citation type="submission" date="2006-06" db="EMBL/GenBank/DDBJ databases">
        <title>Complete sequence of chromosome of Mesorhizobium sp. BNC1.</title>
        <authorList>
            <consortium name="US DOE Joint Genome Institute"/>
            <person name="Copeland A."/>
            <person name="Lucas S."/>
            <person name="Lapidus A."/>
            <person name="Barry K."/>
            <person name="Detter J.C."/>
            <person name="Glavina del Rio T."/>
            <person name="Hammon N."/>
            <person name="Israni S."/>
            <person name="Dalin E."/>
            <person name="Tice H."/>
            <person name="Pitluck S."/>
            <person name="Chertkov O."/>
            <person name="Brettin T."/>
            <person name="Bruce D."/>
            <person name="Han C."/>
            <person name="Tapia R."/>
            <person name="Gilna P."/>
            <person name="Schmutz J."/>
            <person name="Larimer F."/>
            <person name="Land M."/>
            <person name="Hauser L."/>
            <person name="Kyrpides N."/>
            <person name="Mikhailova N."/>
            <person name="Richardson P."/>
        </authorList>
    </citation>
    <scope>NUCLEOTIDE SEQUENCE [LARGE SCALE GENOMIC DNA]</scope>
    <source>
        <strain>BNC1</strain>
    </source>
</reference>
<comment type="similarity">
    <text evidence="1">Belongs to the UPF0229 family.</text>
</comment>
<sequence length="436" mass="50173">MPIYIDRRLNPKDKSLGNRQRFLKRAREELKRTIKEQVRAGKITDVDAEHRVPMPARGTSEPTFRPDRSSGERGYILPGNKEFAPGDRLPKPGASGGEGGTGAGRGGSDDDFQFVLSREEVLDLFFEDLELPDMVKLNLKEAVAYRPRRAGFATSGSPTNINVGRTMRNSYGRRIALHRPKRQEVERLEAEIARLEVESDKLGGKQLEALRAELESLERKRRRIPYVDPIDIRFNRFEQQPLPNASAVMFCLMDVSSSMGEREKDLAKRFFVLLHLFLKRRYERIDIVFIRHTHEAREVDEETFFYSTQSGGTVVSTALEEMQRIIAERYPSREWNIYAAQASDGDNIAGDSERCASMLRDELMQLCQYYAYVEIIDERETEIFGATDNGTSLWRAYRTVGDQWPNFQMTRIARPADIYPVFRKLFARQSASPTRR</sequence>
<organism>
    <name type="scientific">Chelativorans sp. (strain BNC1)</name>
    <dbReference type="NCBI Taxonomy" id="266779"/>
    <lineage>
        <taxon>Bacteria</taxon>
        <taxon>Pseudomonadati</taxon>
        <taxon>Pseudomonadota</taxon>
        <taxon>Alphaproteobacteria</taxon>
        <taxon>Hyphomicrobiales</taxon>
        <taxon>Phyllobacteriaceae</taxon>
        <taxon>Chelativorans</taxon>
    </lineage>
</organism>
<feature type="chain" id="PRO_1000066865" description="UPF0229 protein Meso_0256">
    <location>
        <begin position="1"/>
        <end position="436"/>
    </location>
</feature>
<feature type="region of interest" description="Disordered" evidence="2">
    <location>
        <begin position="53"/>
        <end position="110"/>
    </location>
</feature>
<feature type="compositionally biased region" description="Gly residues" evidence="2">
    <location>
        <begin position="94"/>
        <end position="106"/>
    </location>
</feature>
<accession>Q11LR5</accession>
<dbReference type="EMBL" id="CP000390">
    <property type="protein sequence ID" value="ABG61660.1"/>
    <property type="molecule type" value="Genomic_DNA"/>
</dbReference>
<dbReference type="STRING" id="266779.Meso_0256"/>
<dbReference type="KEGG" id="mes:Meso_0256"/>
<dbReference type="eggNOG" id="COG2718">
    <property type="taxonomic scope" value="Bacteria"/>
</dbReference>
<dbReference type="HOGENOM" id="CLU_049702_0_0_5"/>
<dbReference type="OrthoDB" id="9788289at2"/>
<dbReference type="HAMAP" id="MF_01232">
    <property type="entry name" value="UPF0229"/>
    <property type="match status" value="1"/>
</dbReference>
<dbReference type="InterPro" id="IPR006698">
    <property type="entry name" value="UPF0229"/>
</dbReference>
<dbReference type="NCBIfam" id="NF003707">
    <property type="entry name" value="PRK05325.1-2"/>
    <property type="match status" value="1"/>
</dbReference>
<dbReference type="NCBIfam" id="NF003708">
    <property type="entry name" value="PRK05325.1-3"/>
    <property type="match status" value="1"/>
</dbReference>
<dbReference type="PANTHER" id="PTHR30510">
    <property type="entry name" value="UPF0229 PROTEIN YEAH"/>
    <property type="match status" value="1"/>
</dbReference>
<dbReference type="PANTHER" id="PTHR30510:SF2">
    <property type="entry name" value="UPF0229 PROTEIN YEAH"/>
    <property type="match status" value="1"/>
</dbReference>
<dbReference type="Pfam" id="PF04285">
    <property type="entry name" value="DUF444"/>
    <property type="match status" value="1"/>
</dbReference>